<name>RSMH_BACCR</name>
<accession>Q819P8</accession>
<protein>
    <recommendedName>
        <fullName evidence="1">Ribosomal RNA small subunit methyltransferase H</fullName>
        <ecNumber evidence="1">2.1.1.199</ecNumber>
    </recommendedName>
    <alternativeName>
        <fullName evidence="1">16S rRNA m(4)C1402 methyltransferase</fullName>
    </alternativeName>
    <alternativeName>
        <fullName evidence="1">rRNA (cytosine-N(4)-)-methyltransferase RsmH</fullName>
    </alternativeName>
</protein>
<organism>
    <name type="scientific">Bacillus cereus (strain ATCC 14579 / DSM 31 / CCUG 7414 / JCM 2152 / NBRC 15305 / NCIMB 9373 / NCTC 2599 / NRRL B-3711)</name>
    <dbReference type="NCBI Taxonomy" id="226900"/>
    <lineage>
        <taxon>Bacteria</taxon>
        <taxon>Bacillati</taxon>
        <taxon>Bacillota</taxon>
        <taxon>Bacilli</taxon>
        <taxon>Bacillales</taxon>
        <taxon>Bacillaceae</taxon>
        <taxon>Bacillus</taxon>
        <taxon>Bacillus cereus group</taxon>
    </lineage>
</organism>
<evidence type="ECO:0000255" key="1">
    <source>
        <dbReference type="HAMAP-Rule" id="MF_01007"/>
    </source>
</evidence>
<dbReference type="EC" id="2.1.1.199" evidence="1"/>
<dbReference type="EMBL" id="AE016877">
    <property type="protein sequence ID" value="AAP10839.1"/>
    <property type="molecule type" value="Genomic_DNA"/>
</dbReference>
<dbReference type="RefSeq" id="NP_833638.1">
    <property type="nucleotide sequence ID" value="NC_004722.1"/>
</dbReference>
<dbReference type="RefSeq" id="WP_000472508.1">
    <property type="nucleotide sequence ID" value="NZ_CP138336.1"/>
</dbReference>
<dbReference type="SMR" id="Q819P8"/>
<dbReference type="STRING" id="226900.BC_3918"/>
<dbReference type="GeneID" id="72450600"/>
<dbReference type="KEGG" id="bce:BC3918"/>
<dbReference type="PATRIC" id="fig|226900.8.peg.4040"/>
<dbReference type="HOGENOM" id="CLU_038422_2_0_9"/>
<dbReference type="OrthoDB" id="9806637at2"/>
<dbReference type="Proteomes" id="UP000001417">
    <property type="component" value="Chromosome"/>
</dbReference>
<dbReference type="GO" id="GO:0005737">
    <property type="term" value="C:cytoplasm"/>
    <property type="evidence" value="ECO:0000318"/>
    <property type="project" value="GO_Central"/>
</dbReference>
<dbReference type="GO" id="GO:0071424">
    <property type="term" value="F:rRNA (cytosine-N4-)-methyltransferase activity"/>
    <property type="evidence" value="ECO:0000318"/>
    <property type="project" value="GO_Central"/>
</dbReference>
<dbReference type="GO" id="GO:0070475">
    <property type="term" value="P:rRNA base methylation"/>
    <property type="evidence" value="ECO:0000318"/>
    <property type="project" value="GO_Central"/>
</dbReference>
<dbReference type="FunFam" id="1.10.150.170:FF:000001">
    <property type="entry name" value="Ribosomal RNA small subunit methyltransferase H"/>
    <property type="match status" value="1"/>
</dbReference>
<dbReference type="Gene3D" id="1.10.150.170">
    <property type="entry name" value="Putative methyltransferase TM0872, insert domain"/>
    <property type="match status" value="1"/>
</dbReference>
<dbReference type="Gene3D" id="3.40.50.150">
    <property type="entry name" value="Vaccinia Virus protein VP39"/>
    <property type="match status" value="1"/>
</dbReference>
<dbReference type="HAMAP" id="MF_01007">
    <property type="entry name" value="16SrRNA_methyltr_H"/>
    <property type="match status" value="1"/>
</dbReference>
<dbReference type="InterPro" id="IPR002903">
    <property type="entry name" value="RsmH"/>
</dbReference>
<dbReference type="InterPro" id="IPR023397">
    <property type="entry name" value="SAM-dep_MeTrfase_MraW_recog"/>
</dbReference>
<dbReference type="InterPro" id="IPR029063">
    <property type="entry name" value="SAM-dependent_MTases_sf"/>
</dbReference>
<dbReference type="NCBIfam" id="TIGR00006">
    <property type="entry name" value="16S rRNA (cytosine(1402)-N(4))-methyltransferase RsmH"/>
    <property type="match status" value="1"/>
</dbReference>
<dbReference type="PANTHER" id="PTHR11265:SF0">
    <property type="entry name" value="12S RRNA N4-METHYLCYTIDINE METHYLTRANSFERASE"/>
    <property type="match status" value="1"/>
</dbReference>
<dbReference type="PANTHER" id="PTHR11265">
    <property type="entry name" value="S-ADENOSYL-METHYLTRANSFERASE MRAW"/>
    <property type="match status" value="1"/>
</dbReference>
<dbReference type="Pfam" id="PF01795">
    <property type="entry name" value="Methyltransf_5"/>
    <property type="match status" value="1"/>
</dbReference>
<dbReference type="PIRSF" id="PIRSF004486">
    <property type="entry name" value="MraW"/>
    <property type="match status" value="1"/>
</dbReference>
<dbReference type="SUPFAM" id="SSF81799">
    <property type="entry name" value="Putative methyltransferase TM0872, insert domain"/>
    <property type="match status" value="1"/>
</dbReference>
<dbReference type="SUPFAM" id="SSF53335">
    <property type="entry name" value="S-adenosyl-L-methionine-dependent methyltransferases"/>
    <property type="match status" value="1"/>
</dbReference>
<comment type="function">
    <text evidence="1">Specifically methylates the N4 position of cytidine in position 1402 (C1402) of 16S rRNA.</text>
</comment>
<comment type="catalytic activity">
    <reaction evidence="1">
        <text>cytidine(1402) in 16S rRNA + S-adenosyl-L-methionine = N(4)-methylcytidine(1402) in 16S rRNA + S-adenosyl-L-homocysteine + H(+)</text>
        <dbReference type="Rhea" id="RHEA:42928"/>
        <dbReference type="Rhea" id="RHEA-COMP:10286"/>
        <dbReference type="Rhea" id="RHEA-COMP:10287"/>
        <dbReference type="ChEBI" id="CHEBI:15378"/>
        <dbReference type="ChEBI" id="CHEBI:57856"/>
        <dbReference type="ChEBI" id="CHEBI:59789"/>
        <dbReference type="ChEBI" id="CHEBI:74506"/>
        <dbReference type="ChEBI" id="CHEBI:82748"/>
        <dbReference type="EC" id="2.1.1.199"/>
    </reaction>
</comment>
<comment type="subcellular location">
    <subcellularLocation>
        <location evidence="1">Cytoplasm</location>
    </subcellularLocation>
</comment>
<comment type="similarity">
    <text evidence="1">Belongs to the methyltransferase superfamily. RsmH family.</text>
</comment>
<sequence length="310" mass="34929">MFKHVTVLLKETVDGLDIKPDGTYVDCTLGGGGHSSYLLSQLTEGGKLIAFDQDEIAIQNAKEKFSSYGEQFITVKSNFRYLAEKLQEIGITEVDGILFDLGVSSPQLDTPERGFSYHHDAPLDMRMDQDAPLTAYDVVNSWSYEQLVRIFFQYGEEKFSKQIARKIEAYRENKAIETTGELVELIKEGIPAPARRTGGHPAKRVFQAIRIAVNDELKVFEEALESAIEMVKPGGRVSVITFHSLEDRICKTTFKRNSTTPQLPPGLPIIPDEFKPKLKLITRKPILPSDIELEENNRARSAKLRIAEKR</sequence>
<gene>
    <name evidence="1" type="primary">rsmH</name>
    <name type="synonym">mraW</name>
    <name type="ordered locus">BC_3918</name>
</gene>
<feature type="chain" id="PRO_0000108571" description="Ribosomal RNA small subunit methyltransferase H">
    <location>
        <begin position="1"/>
        <end position="310"/>
    </location>
</feature>
<feature type="binding site" evidence="1">
    <location>
        <begin position="32"/>
        <end position="34"/>
    </location>
    <ligand>
        <name>S-adenosyl-L-methionine</name>
        <dbReference type="ChEBI" id="CHEBI:59789"/>
    </ligand>
</feature>
<feature type="binding site" evidence="1">
    <location>
        <position position="52"/>
    </location>
    <ligand>
        <name>S-adenosyl-L-methionine</name>
        <dbReference type="ChEBI" id="CHEBI:59789"/>
    </ligand>
</feature>
<feature type="binding site" evidence="1">
    <location>
        <position position="79"/>
    </location>
    <ligand>
        <name>S-adenosyl-L-methionine</name>
        <dbReference type="ChEBI" id="CHEBI:59789"/>
    </ligand>
</feature>
<feature type="binding site" evidence="1">
    <location>
        <position position="100"/>
    </location>
    <ligand>
        <name>S-adenosyl-L-methionine</name>
        <dbReference type="ChEBI" id="CHEBI:59789"/>
    </ligand>
</feature>
<feature type="binding site" evidence="1">
    <location>
        <position position="107"/>
    </location>
    <ligand>
        <name>S-adenosyl-L-methionine</name>
        <dbReference type="ChEBI" id="CHEBI:59789"/>
    </ligand>
</feature>
<keyword id="KW-0963">Cytoplasm</keyword>
<keyword id="KW-0489">Methyltransferase</keyword>
<keyword id="KW-1185">Reference proteome</keyword>
<keyword id="KW-0698">rRNA processing</keyword>
<keyword id="KW-0949">S-adenosyl-L-methionine</keyword>
<keyword id="KW-0808">Transferase</keyword>
<proteinExistence type="inferred from homology"/>
<reference key="1">
    <citation type="journal article" date="2003" name="Nature">
        <title>Genome sequence of Bacillus cereus and comparative analysis with Bacillus anthracis.</title>
        <authorList>
            <person name="Ivanova N."/>
            <person name="Sorokin A."/>
            <person name="Anderson I."/>
            <person name="Galleron N."/>
            <person name="Candelon B."/>
            <person name="Kapatral V."/>
            <person name="Bhattacharyya A."/>
            <person name="Reznik G."/>
            <person name="Mikhailova N."/>
            <person name="Lapidus A."/>
            <person name="Chu L."/>
            <person name="Mazur M."/>
            <person name="Goltsman E."/>
            <person name="Larsen N."/>
            <person name="D'Souza M."/>
            <person name="Walunas T."/>
            <person name="Grechkin Y."/>
            <person name="Pusch G."/>
            <person name="Haselkorn R."/>
            <person name="Fonstein M."/>
            <person name="Ehrlich S.D."/>
            <person name="Overbeek R."/>
            <person name="Kyrpides N.C."/>
        </authorList>
    </citation>
    <scope>NUCLEOTIDE SEQUENCE [LARGE SCALE GENOMIC DNA]</scope>
    <source>
        <strain>ATCC 14579 / DSM 31 / CCUG 7414 / JCM 2152 / NBRC 15305 / NCIMB 9373 / NCTC 2599 / NRRL B-3711</strain>
    </source>
</reference>